<feature type="chain" id="PRO_1000137759" description="Curved DNA-binding protein">
    <location>
        <begin position="1"/>
        <end position="306"/>
    </location>
</feature>
<feature type="domain" description="J" evidence="1">
    <location>
        <begin position="5"/>
        <end position="69"/>
    </location>
</feature>
<gene>
    <name evidence="1" type="primary">cbpA</name>
    <name type="ordered locus">SeHA_C1222</name>
</gene>
<dbReference type="EMBL" id="CP001120">
    <property type="protein sequence ID" value="ACF69815.1"/>
    <property type="molecule type" value="Genomic_DNA"/>
</dbReference>
<dbReference type="RefSeq" id="WP_000420603.1">
    <property type="nucleotide sequence ID" value="NC_011083.1"/>
</dbReference>
<dbReference type="SMR" id="B4TEN5"/>
<dbReference type="KEGG" id="seh:SeHA_C1222"/>
<dbReference type="HOGENOM" id="CLU_017633_0_0_6"/>
<dbReference type="Proteomes" id="UP000001866">
    <property type="component" value="Chromosome"/>
</dbReference>
<dbReference type="GO" id="GO:0005737">
    <property type="term" value="C:cytoplasm"/>
    <property type="evidence" value="ECO:0007669"/>
    <property type="project" value="UniProtKB-UniRule"/>
</dbReference>
<dbReference type="GO" id="GO:0009295">
    <property type="term" value="C:nucleoid"/>
    <property type="evidence" value="ECO:0007669"/>
    <property type="project" value="UniProtKB-SubCell"/>
</dbReference>
<dbReference type="GO" id="GO:0003681">
    <property type="term" value="F:bent DNA binding"/>
    <property type="evidence" value="ECO:0007669"/>
    <property type="project" value="UniProtKB-UniRule"/>
</dbReference>
<dbReference type="GO" id="GO:0051082">
    <property type="term" value="F:unfolded protein binding"/>
    <property type="evidence" value="ECO:0007669"/>
    <property type="project" value="InterPro"/>
</dbReference>
<dbReference type="GO" id="GO:0051085">
    <property type="term" value="P:chaperone cofactor-dependent protein refolding"/>
    <property type="evidence" value="ECO:0007669"/>
    <property type="project" value="TreeGrafter"/>
</dbReference>
<dbReference type="GO" id="GO:0042026">
    <property type="term" value="P:protein refolding"/>
    <property type="evidence" value="ECO:0007669"/>
    <property type="project" value="TreeGrafter"/>
</dbReference>
<dbReference type="CDD" id="cd06257">
    <property type="entry name" value="DnaJ"/>
    <property type="match status" value="1"/>
</dbReference>
<dbReference type="CDD" id="cd10747">
    <property type="entry name" value="DnaJ_C"/>
    <property type="match status" value="1"/>
</dbReference>
<dbReference type="FunFam" id="1.10.287.110:FF:000013">
    <property type="entry name" value="Curved DNA-binding protein"/>
    <property type="match status" value="1"/>
</dbReference>
<dbReference type="FunFam" id="2.60.260.20:FF:000008">
    <property type="entry name" value="Curved DNA-binding protein"/>
    <property type="match status" value="1"/>
</dbReference>
<dbReference type="Gene3D" id="1.10.287.110">
    <property type="entry name" value="DnaJ domain"/>
    <property type="match status" value="1"/>
</dbReference>
<dbReference type="Gene3D" id="1.20.5.460">
    <property type="entry name" value="Single helix bin"/>
    <property type="match status" value="1"/>
</dbReference>
<dbReference type="Gene3D" id="2.60.260.20">
    <property type="entry name" value="Urease metallochaperone UreE, N-terminal domain"/>
    <property type="match status" value="2"/>
</dbReference>
<dbReference type="HAMAP" id="MF_01154">
    <property type="entry name" value="CbpA"/>
    <property type="match status" value="1"/>
</dbReference>
<dbReference type="InterPro" id="IPR023859">
    <property type="entry name" value="DNA-bd_curved-DNA"/>
</dbReference>
<dbReference type="InterPro" id="IPR002939">
    <property type="entry name" value="DnaJ_C"/>
</dbReference>
<dbReference type="InterPro" id="IPR001623">
    <property type="entry name" value="DnaJ_domain"/>
</dbReference>
<dbReference type="InterPro" id="IPR018253">
    <property type="entry name" value="DnaJ_domain_CS"/>
</dbReference>
<dbReference type="InterPro" id="IPR008971">
    <property type="entry name" value="HSP40/DnaJ_pept-bd"/>
</dbReference>
<dbReference type="InterPro" id="IPR036869">
    <property type="entry name" value="J_dom_sf"/>
</dbReference>
<dbReference type="NCBIfam" id="NF007618">
    <property type="entry name" value="PRK10266.1"/>
    <property type="match status" value="1"/>
</dbReference>
<dbReference type="PANTHER" id="PTHR43096">
    <property type="entry name" value="DNAJ HOMOLOG 1, MITOCHONDRIAL-RELATED"/>
    <property type="match status" value="1"/>
</dbReference>
<dbReference type="PANTHER" id="PTHR43096:SF52">
    <property type="entry name" value="DNAJ HOMOLOG 1, MITOCHONDRIAL-RELATED"/>
    <property type="match status" value="1"/>
</dbReference>
<dbReference type="Pfam" id="PF00226">
    <property type="entry name" value="DnaJ"/>
    <property type="match status" value="1"/>
</dbReference>
<dbReference type="Pfam" id="PF01556">
    <property type="entry name" value="DnaJ_C"/>
    <property type="match status" value="1"/>
</dbReference>
<dbReference type="PRINTS" id="PR00625">
    <property type="entry name" value="JDOMAIN"/>
</dbReference>
<dbReference type="SMART" id="SM00271">
    <property type="entry name" value="DnaJ"/>
    <property type="match status" value="1"/>
</dbReference>
<dbReference type="SUPFAM" id="SSF46565">
    <property type="entry name" value="Chaperone J-domain"/>
    <property type="match status" value="1"/>
</dbReference>
<dbReference type="SUPFAM" id="SSF49493">
    <property type="entry name" value="HSP40/DnaJ peptide-binding domain"/>
    <property type="match status" value="2"/>
</dbReference>
<dbReference type="PROSITE" id="PS00636">
    <property type="entry name" value="DNAJ_1"/>
    <property type="match status" value="1"/>
</dbReference>
<dbReference type="PROSITE" id="PS50076">
    <property type="entry name" value="DNAJ_2"/>
    <property type="match status" value="1"/>
</dbReference>
<organism>
    <name type="scientific">Salmonella heidelberg (strain SL476)</name>
    <dbReference type="NCBI Taxonomy" id="454169"/>
    <lineage>
        <taxon>Bacteria</taxon>
        <taxon>Pseudomonadati</taxon>
        <taxon>Pseudomonadota</taxon>
        <taxon>Gammaproteobacteria</taxon>
        <taxon>Enterobacterales</taxon>
        <taxon>Enterobacteriaceae</taxon>
        <taxon>Salmonella</taxon>
    </lineage>
</organism>
<comment type="function">
    <text evidence="1">DNA-binding protein that preferentially recognizes a curved DNA sequence. It is probably a functional analog of DnaJ; displays overlapping activities with DnaJ, but functions under different conditions, probably acting as a molecular chaperone in an adaptive response to environmental stresses other than heat shock. Lacks autonomous chaperone activity; binds native substrates and targets them for recognition by DnaK. Its activity is inhibited by the binding of CbpM.</text>
</comment>
<comment type="subcellular location">
    <subcellularLocation>
        <location evidence="1">Cytoplasm</location>
        <location evidence="1">Nucleoid</location>
    </subcellularLocation>
</comment>
<reference key="1">
    <citation type="journal article" date="2011" name="J. Bacteriol.">
        <title>Comparative genomics of 28 Salmonella enterica isolates: evidence for CRISPR-mediated adaptive sublineage evolution.</title>
        <authorList>
            <person name="Fricke W.F."/>
            <person name="Mammel M.K."/>
            <person name="McDermott P.F."/>
            <person name="Tartera C."/>
            <person name="White D.G."/>
            <person name="Leclerc J.E."/>
            <person name="Ravel J."/>
            <person name="Cebula T.A."/>
        </authorList>
    </citation>
    <scope>NUCLEOTIDE SEQUENCE [LARGE SCALE GENOMIC DNA]</scope>
    <source>
        <strain>SL476</strain>
    </source>
</reference>
<sequence>MELKDYYAIMGVKPTDDLKTIKTAYRRLARKYHPDVSKEPDAEARFKEVAEAWEVLSDEQRRAEYDQLWQHRNDPQFNRQFQQHEGQPYNAEDFDDIFSSIFGQHGRHSHHRHAARGHDIEIEVAVFLEETLEEHQRTISYSVPVYNAFGLVEREIPKTLNVKIPAGVSNGQRIRLKGQGTPGENGGPNGDLWLVIHIAPHPLFDIVNQDLEVVLPLAPWEAALGAKVSVPTLKERILLTIPPGSQAGQRLRIKGKGLASKKHTGDLYAIIKIVMPPKPDEKTAALWQQLADAQSSFDPRQQWGKA</sequence>
<name>CBPA_SALHS</name>
<accession>B4TEN5</accession>
<evidence type="ECO:0000255" key="1">
    <source>
        <dbReference type="HAMAP-Rule" id="MF_01154"/>
    </source>
</evidence>
<proteinExistence type="inferred from homology"/>
<keyword id="KW-0143">Chaperone</keyword>
<keyword id="KW-0963">Cytoplasm</keyword>
<keyword id="KW-0238">DNA-binding</keyword>
<protein>
    <recommendedName>
        <fullName evidence="1">Curved DNA-binding protein</fullName>
    </recommendedName>
</protein>